<dbReference type="EMBL" id="CP001129">
    <property type="protein sequence ID" value="ACG62775.1"/>
    <property type="molecule type" value="Genomic_DNA"/>
</dbReference>
<dbReference type="RefSeq" id="WP_012516037.1">
    <property type="nucleotide sequence ID" value="NC_011134.1"/>
</dbReference>
<dbReference type="SMR" id="B4U458"/>
<dbReference type="KEGG" id="sez:Sez_1441"/>
<dbReference type="HOGENOM" id="CLU_038009_1_0_9"/>
<dbReference type="Proteomes" id="UP000001873">
    <property type="component" value="Chromosome"/>
</dbReference>
<dbReference type="GO" id="GO:0005829">
    <property type="term" value="C:cytosol"/>
    <property type="evidence" value="ECO:0007669"/>
    <property type="project" value="TreeGrafter"/>
</dbReference>
<dbReference type="GO" id="GO:0005886">
    <property type="term" value="C:plasma membrane"/>
    <property type="evidence" value="ECO:0007669"/>
    <property type="project" value="UniProtKB-SubCell"/>
</dbReference>
<dbReference type="GO" id="GO:0005525">
    <property type="term" value="F:GTP binding"/>
    <property type="evidence" value="ECO:0007669"/>
    <property type="project" value="UniProtKB-UniRule"/>
</dbReference>
<dbReference type="GO" id="GO:0003924">
    <property type="term" value="F:GTPase activity"/>
    <property type="evidence" value="ECO:0007669"/>
    <property type="project" value="UniProtKB-UniRule"/>
</dbReference>
<dbReference type="GO" id="GO:0043024">
    <property type="term" value="F:ribosomal small subunit binding"/>
    <property type="evidence" value="ECO:0007669"/>
    <property type="project" value="TreeGrafter"/>
</dbReference>
<dbReference type="GO" id="GO:0070181">
    <property type="term" value="F:small ribosomal subunit rRNA binding"/>
    <property type="evidence" value="ECO:0007669"/>
    <property type="project" value="UniProtKB-UniRule"/>
</dbReference>
<dbReference type="GO" id="GO:0000028">
    <property type="term" value="P:ribosomal small subunit assembly"/>
    <property type="evidence" value="ECO:0007669"/>
    <property type="project" value="TreeGrafter"/>
</dbReference>
<dbReference type="CDD" id="cd04163">
    <property type="entry name" value="Era"/>
    <property type="match status" value="1"/>
</dbReference>
<dbReference type="CDD" id="cd22534">
    <property type="entry name" value="KH-II_Era"/>
    <property type="match status" value="1"/>
</dbReference>
<dbReference type="FunFam" id="3.30.300.20:FF:000003">
    <property type="entry name" value="GTPase Era"/>
    <property type="match status" value="1"/>
</dbReference>
<dbReference type="FunFam" id="3.40.50.300:FF:000094">
    <property type="entry name" value="GTPase Era"/>
    <property type="match status" value="1"/>
</dbReference>
<dbReference type="Gene3D" id="3.30.300.20">
    <property type="match status" value="1"/>
</dbReference>
<dbReference type="Gene3D" id="3.40.50.300">
    <property type="entry name" value="P-loop containing nucleotide triphosphate hydrolases"/>
    <property type="match status" value="1"/>
</dbReference>
<dbReference type="HAMAP" id="MF_00367">
    <property type="entry name" value="GTPase_Era"/>
    <property type="match status" value="1"/>
</dbReference>
<dbReference type="InterPro" id="IPR030388">
    <property type="entry name" value="G_ERA_dom"/>
</dbReference>
<dbReference type="InterPro" id="IPR006073">
    <property type="entry name" value="GTP-bd"/>
</dbReference>
<dbReference type="InterPro" id="IPR005662">
    <property type="entry name" value="GTPase_Era-like"/>
</dbReference>
<dbReference type="InterPro" id="IPR015946">
    <property type="entry name" value="KH_dom-like_a/b"/>
</dbReference>
<dbReference type="InterPro" id="IPR004044">
    <property type="entry name" value="KH_dom_type_2"/>
</dbReference>
<dbReference type="InterPro" id="IPR009019">
    <property type="entry name" value="KH_sf_prok-type"/>
</dbReference>
<dbReference type="InterPro" id="IPR027417">
    <property type="entry name" value="P-loop_NTPase"/>
</dbReference>
<dbReference type="InterPro" id="IPR005225">
    <property type="entry name" value="Small_GTP-bd"/>
</dbReference>
<dbReference type="NCBIfam" id="TIGR00436">
    <property type="entry name" value="era"/>
    <property type="match status" value="1"/>
</dbReference>
<dbReference type="NCBIfam" id="NF000908">
    <property type="entry name" value="PRK00089.1"/>
    <property type="match status" value="1"/>
</dbReference>
<dbReference type="NCBIfam" id="TIGR00231">
    <property type="entry name" value="small_GTP"/>
    <property type="match status" value="1"/>
</dbReference>
<dbReference type="PANTHER" id="PTHR42698">
    <property type="entry name" value="GTPASE ERA"/>
    <property type="match status" value="1"/>
</dbReference>
<dbReference type="PANTHER" id="PTHR42698:SF1">
    <property type="entry name" value="GTPASE ERA, MITOCHONDRIAL"/>
    <property type="match status" value="1"/>
</dbReference>
<dbReference type="Pfam" id="PF07650">
    <property type="entry name" value="KH_2"/>
    <property type="match status" value="1"/>
</dbReference>
<dbReference type="Pfam" id="PF01926">
    <property type="entry name" value="MMR_HSR1"/>
    <property type="match status" value="1"/>
</dbReference>
<dbReference type="SUPFAM" id="SSF52540">
    <property type="entry name" value="P-loop containing nucleoside triphosphate hydrolases"/>
    <property type="match status" value="1"/>
</dbReference>
<dbReference type="SUPFAM" id="SSF54814">
    <property type="entry name" value="Prokaryotic type KH domain (KH-domain type II)"/>
    <property type="match status" value="1"/>
</dbReference>
<dbReference type="PROSITE" id="PS51713">
    <property type="entry name" value="G_ERA"/>
    <property type="match status" value="1"/>
</dbReference>
<dbReference type="PROSITE" id="PS50823">
    <property type="entry name" value="KH_TYPE_2"/>
    <property type="match status" value="1"/>
</dbReference>
<proteinExistence type="inferred from homology"/>
<gene>
    <name evidence="1" type="primary">era</name>
    <name type="ordered locus">Sez_1441</name>
</gene>
<reference key="1">
    <citation type="journal article" date="2008" name="PLoS ONE">
        <title>Genome sequence of a lancefield group C Streptococcus zooepidemicus strain causing epidemic nephritis: new information about an old disease.</title>
        <authorList>
            <person name="Beres S.B."/>
            <person name="Sesso R."/>
            <person name="Pinto S.W.L."/>
            <person name="Hoe N.P."/>
            <person name="Porcella S.F."/>
            <person name="Deleo F.R."/>
            <person name="Musser J.M."/>
        </authorList>
    </citation>
    <scope>NUCLEOTIDE SEQUENCE [LARGE SCALE GENOMIC DNA]</scope>
    <source>
        <strain>MGCS10565</strain>
    </source>
</reference>
<name>ERA_STREM</name>
<feature type="chain" id="PRO_1000121356" description="GTPase Era">
    <location>
        <begin position="1"/>
        <end position="298"/>
    </location>
</feature>
<feature type="domain" description="Era-type G" evidence="2">
    <location>
        <begin position="3"/>
        <end position="170"/>
    </location>
</feature>
<feature type="domain" description="KH type-2" evidence="1">
    <location>
        <begin position="201"/>
        <end position="279"/>
    </location>
</feature>
<feature type="region of interest" description="G1" evidence="2">
    <location>
        <begin position="11"/>
        <end position="18"/>
    </location>
</feature>
<feature type="region of interest" description="G2" evidence="2">
    <location>
        <begin position="37"/>
        <end position="41"/>
    </location>
</feature>
<feature type="region of interest" description="G3" evidence="2">
    <location>
        <begin position="58"/>
        <end position="61"/>
    </location>
</feature>
<feature type="region of interest" description="G4" evidence="2">
    <location>
        <begin position="120"/>
        <end position="123"/>
    </location>
</feature>
<feature type="region of interest" description="G5" evidence="2">
    <location>
        <begin position="149"/>
        <end position="151"/>
    </location>
</feature>
<feature type="binding site" evidence="1">
    <location>
        <begin position="11"/>
        <end position="18"/>
    </location>
    <ligand>
        <name>GTP</name>
        <dbReference type="ChEBI" id="CHEBI:37565"/>
    </ligand>
</feature>
<feature type="binding site" evidence="1">
    <location>
        <begin position="58"/>
        <end position="62"/>
    </location>
    <ligand>
        <name>GTP</name>
        <dbReference type="ChEBI" id="CHEBI:37565"/>
    </ligand>
</feature>
<feature type="binding site" evidence="1">
    <location>
        <begin position="120"/>
        <end position="123"/>
    </location>
    <ligand>
        <name>GTP</name>
        <dbReference type="ChEBI" id="CHEBI:37565"/>
    </ligand>
</feature>
<accession>B4U458</accession>
<comment type="function">
    <text evidence="1">An essential GTPase that binds both GDP and GTP, with rapid nucleotide exchange. Plays a role in 16S rRNA processing and 30S ribosomal subunit biogenesis and possibly also in cell cycle regulation and energy metabolism.</text>
</comment>
<comment type="subunit">
    <text evidence="1">Monomer.</text>
</comment>
<comment type="subcellular location">
    <subcellularLocation>
        <location>Cytoplasm</location>
    </subcellularLocation>
    <subcellularLocation>
        <location evidence="1">Cell membrane</location>
        <topology evidence="1">Peripheral membrane protein</topology>
    </subcellularLocation>
</comment>
<comment type="similarity">
    <text evidence="1 2">Belongs to the TRAFAC class TrmE-Era-EngA-EngB-Septin-like GTPase superfamily. Era GTPase family.</text>
</comment>
<organism>
    <name type="scientific">Streptococcus equi subsp. zooepidemicus (strain MGCS10565)</name>
    <dbReference type="NCBI Taxonomy" id="552526"/>
    <lineage>
        <taxon>Bacteria</taxon>
        <taxon>Bacillati</taxon>
        <taxon>Bacillota</taxon>
        <taxon>Bacilli</taxon>
        <taxon>Lactobacillales</taxon>
        <taxon>Streptococcaceae</taxon>
        <taxon>Streptococcus</taxon>
    </lineage>
</organism>
<keyword id="KW-1003">Cell membrane</keyword>
<keyword id="KW-0963">Cytoplasm</keyword>
<keyword id="KW-0342">GTP-binding</keyword>
<keyword id="KW-0472">Membrane</keyword>
<keyword id="KW-0547">Nucleotide-binding</keyword>
<keyword id="KW-0690">Ribosome biogenesis</keyword>
<keyword id="KW-0694">RNA-binding</keyword>
<keyword id="KW-0699">rRNA-binding</keyword>
<evidence type="ECO:0000255" key="1">
    <source>
        <dbReference type="HAMAP-Rule" id="MF_00367"/>
    </source>
</evidence>
<evidence type="ECO:0000255" key="2">
    <source>
        <dbReference type="PROSITE-ProRule" id="PRU01050"/>
    </source>
</evidence>
<protein>
    <recommendedName>
        <fullName evidence="1">GTPase Era</fullName>
    </recommendedName>
</protein>
<sequence length="298" mass="34158">MFKSGFVAILGRPNVGKSTFLNHVMGQKIAIMSDKAQTTRNKIMGIYTTETEQIVFIDTPGIHKPKTALGDFMVESAYSTLREVETVLFMVPADEKRGKGDDMIIERLKAARIPVILVINKIDKVHPDQLLEQIDDFRSQMDFKEIVPISALQGNNVETLVQLLKDNLEEGFQYFPEDQITDHPERFLVSEMVREKVLHLTQQEVPHSVAVVVDSMKRDEVTDKVHIRVTIMVERDSQKGIIIGKQGAMLKKIGKLARRDIELMLGDKVYLETWVKVKKNWRDKKLDLADFGYNKKEY</sequence>